<evidence type="ECO:0000255" key="1">
    <source>
        <dbReference type="HAMAP-Rule" id="MF_00394"/>
    </source>
</evidence>
<sequence>MNAVSMTVIGAGSYGTALAIAFARNGHHVLLWGYNPQHVRELQIHRCNQAFLPDVQFPDNLSPEASLETAITASRNILIAVPSHVFHQVLYNIQPYLNQHSRIIWATKGLEHGTGRLLQEVAREILGDKIPLAIFSGPTFAKELAIGLPTAITVAASNAEFSEELQQLFHCDKSFRVYKNPDMIGVQLGGVIKNVIAIGAGISDGMGFGANARIALITRGLAEISRLGIAMGAELSTFMGMTGLGDLVLTCTDNQSRNRRFGILLGQGMDIEEAEKQIGQIVEGYLNTKEVRMLARRIGVEMPITEQIYHVLYSGKSVVEAANTLLSRTLKDEIHDKVCF</sequence>
<gene>
    <name evidence="1" type="primary">gpsA</name>
    <name type="ordered locus">BQ01190</name>
</gene>
<reference key="1">
    <citation type="journal article" date="2004" name="Proc. Natl. Acad. Sci. U.S.A.">
        <title>The louse-borne human pathogen Bartonella quintana is a genomic derivative of the zoonotic agent Bartonella henselae.</title>
        <authorList>
            <person name="Alsmark U.C.M."/>
            <person name="Frank A.C."/>
            <person name="Karlberg E.O."/>
            <person name="Legault B.-A."/>
            <person name="Ardell D.H."/>
            <person name="Canbaeck B."/>
            <person name="Eriksson A.-S."/>
            <person name="Naeslund A.K."/>
            <person name="Handley S.A."/>
            <person name="Huvet M."/>
            <person name="La Scola B."/>
            <person name="Holmberg M."/>
            <person name="Andersson S.G.E."/>
        </authorList>
    </citation>
    <scope>NUCLEOTIDE SEQUENCE [LARGE SCALE GENOMIC DNA]</scope>
    <source>
        <strain>Toulouse</strain>
    </source>
</reference>
<dbReference type="EC" id="1.1.1.94" evidence="1"/>
<dbReference type="EMBL" id="BX897700">
    <property type="protein sequence ID" value="CAF25625.1"/>
    <property type="molecule type" value="Genomic_DNA"/>
</dbReference>
<dbReference type="RefSeq" id="WP_011178947.1">
    <property type="nucleotide sequence ID" value="NC_005955.1"/>
</dbReference>
<dbReference type="SMR" id="Q6G0U8"/>
<dbReference type="KEGG" id="bqu:BQ01190"/>
<dbReference type="eggNOG" id="COG0240">
    <property type="taxonomic scope" value="Bacteria"/>
</dbReference>
<dbReference type="HOGENOM" id="CLU_033449_0_2_5"/>
<dbReference type="OrthoDB" id="9812273at2"/>
<dbReference type="UniPathway" id="UPA00940"/>
<dbReference type="Proteomes" id="UP000000597">
    <property type="component" value="Chromosome"/>
</dbReference>
<dbReference type="GO" id="GO:0005829">
    <property type="term" value="C:cytosol"/>
    <property type="evidence" value="ECO:0007669"/>
    <property type="project" value="TreeGrafter"/>
</dbReference>
<dbReference type="GO" id="GO:0047952">
    <property type="term" value="F:glycerol-3-phosphate dehydrogenase [NAD(P)+] activity"/>
    <property type="evidence" value="ECO:0007669"/>
    <property type="project" value="UniProtKB-UniRule"/>
</dbReference>
<dbReference type="GO" id="GO:0051287">
    <property type="term" value="F:NAD binding"/>
    <property type="evidence" value="ECO:0007669"/>
    <property type="project" value="InterPro"/>
</dbReference>
<dbReference type="GO" id="GO:0005975">
    <property type="term" value="P:carbohydrate metabolic process"/>
    <property type="evidence" value="ECO:0007669"/>
    <property type="project" value="InterPro"/>
</dbReference>
<dbReference type="GO" id="GO:0046167">
    <property type="term" value="P:glycerol-3-phosphate biosynthetic process"/>
    <property type="evidence" value="ECO:0007669"/>
    <property type="project" value="UniProtKB-UniRule"/>
</dbReference>
<dbReference type="GO" id="GO:0046168">
    <property type="term" value="P:glycerol-3-phosphate catabolic process"/>
    <property type="evidence" value="ECO:0007669"/>
    <property type="project" value="InterPro"/>
</dbReference>
<dbReference type="GO" id="GO:0046474">
    <property type="term" value="P:glycerophospholipid biosynthetic process"/>
    <property type="evidence" value="ECO:0007669"/>
    <property type="project" value="TreeGrafter"/>
</dbReference>
<dbReference type="FunFam" id="1.10.1040.10:FF:000001">
    <property type="entry name" value="Glycerol-3-phosphate dehydrogenase [NAD(P)+]"/>
    <property type="match status" value="1"/>
</dbReference>
<dbReference type="FunFam" id="3.40.50.720:FF:000019">
    <property type="entry name" value="Glycerol-3-phosphate dehydrogenase [NAD(P)+]"/>
    <property type="match status" value="1"/>
</dbReference>
<dbReference type="Gene3D" id="1.10.1040.10">
    <property type="entry name" value="N-(1-d-carboxylethyl)-l-norvaline Dehydrogenase, domain 2"/>
    <property type="match status" value="1"/>
</dbReference>
<dbReference type="Gene3D" id="3.40.50.720">
    <property type="entry name" value="NAD(P)-binding Rossmann-like Domain"/>
    <property type="match status" value="1"/>
</dbReference>
<dbReference type="HAMAP" id="MF_00394">
    <property type="entry name" value="NAD_Glyc3P_dehydrog"/>
    <property type="match status" value="1"/>
</dbReference>
<dbReference type="InterPro" id="IPR008927">
    <property type="entry name" value="6-PGluconate_DH-like_C_sf"/>
</dbReference>
<dbReference type="InterPro" id="IPR013328">
    <property type="entry name" value="6PGD_dom2"/>
</dbReference>
<dbReference type="InterPro" id="IPR006168">
    <property type="entry name" value="G3P_DH_NAD-dep"/>
</dbReference>
<dbReference type="InterPro" id="IPR006109">
    <property type="entry name" value="G3P_DH_NAD-dep_C"/>
</dbReference>
<dbReference type="InterPro" id="IPR011128">
    <property type="entry name" value="G3P_DH_NAD-dep_N"/>
</dbReference>
<dbReference type="InterPro" id="IPR036291">
    <property type="entry name" value="NAD(P)-bd_dom_sf"/>
</dbReference>
<dbReference type="NCBIfam" id="NF000939">
    <property type="entry name" value="PRK00094.1-1"/>
    <property type="match status" value="1"/>
</dbReference>
<dbReference type="NCBIfam" id="NF000940">
    <property type="entry name" value="PRK00094.1-2"/>
    <property type="match status" value="1"/>
</dbReference>
<dbReference type="NCBIfam" id="NF000942">
    <property type="entry name" value="PRK00094.1-4"/>
    <property type="match status" value="1"/>
</dbReference>
<dbReference type="PANTHER" id="PTHR11728">
    <property type="entry name" value="GLYCEROL-3-PHOSPHATE DEHYDROGENASE"/>
    <property type="match status" value="1"/>
</dbReference>
<dbReference type="PANTHER" id="PTHR11728:SF1">
    <property type="entry name" value="GLYCEROL-3-PHOSPHATE DEHYDROGENASE [NAD(+)] 2, CHLOROPLASTIC"/>
    <property type="match status" value="1"/>
</dbReference>
<dbReference type="Pfam" id="PF07479">
    <property type="entry name" value="NAD_Gly3P_dh_C"/>
    <property type="match status" value="1"/>
</dbReference>
<dbReference type="Pfam" id="PF01210">
    <property type="entry name" value="NAD_Gly3P_dh_N"/>
    <property type="match status" value="1"/>
</dbReference>
<dbReference type="PIRSF" id="PIRSF000114">
    <property type="entry name" value="Glycerol-3-P_dh"/>
    <property type="match status" value="1"/>
</dbReference>
<dbReference type="PRINTS" id="PR00077">
    <property type="entry name" value="GPDHDRGNASE"/>
</dbReference>
<dbReference type="SUPFAM" id="SSF48179">
    <property type="entry name" value="6-phosphogluconate dehydrogenase C-terminal domain-like"/>
    <property type="match status" value="1"/>
</dbReference>
<dbReference type="SUPFAM" id="SSF51735">
    <property type="entry name" value="NAD(P)-binding Rossmann-fold domains"/>
    <property type="match status" value="1"/>
</dbReference>
<dbReference type="PROSITE" id="PS00957">
    <property type="entry name" value="NAD_G3PDH"/>
    <property type="match status" value="1"/>
</dbReference>
<comment type="function">
    <text evidence="1">Catalyzes the reduction of the glycolytic intermediate dihydroxyacetone phosphate (DHAP) to sn-glycerol 3-phosphate (G3P), the key precursor for phospholipid synthesis.</text>
</comment>
<comment type="catalytic activity">
    <reaction evidence="1">
        <text>sn-glycerol 3-phosphate + NAD(+) = dihydroxyacetone phosphate + NADH + H(+)</text>
        <dbReference type="Rhea" id="RHEA:11092"/>
        <dbReference type="ChEBI" id="CHEBI:15378"/>
        <dbReference type="ChEBI" id="CHEBI:57540"/>
        <dbReference type="ChEBI" id="CHEBI:57597"/>
        <dbReference type="ChEBI" id="CHEBI:57642"/>
        <dbReference type="ChEBI" id="CHEBI:57945"/>
        <dbReference type="EC" id="1.1.1.94"/>
    </reaction>
    <physiologicalReaction direction="right-to-left" evidence="1">
        <dbReference type="Rhea" id="RHEA:11094"/>
    </physiologicalReaction>
</comment>
<comment type="catalytic activity">
    <reaction evidence="1">
        <text>sn-glycerol 3-phosphate + NADP(+) = dihydroxyacetone phosphate + NADPH + H(+)</text>
        <dbReference type="Rhea" id="RHEA:11096"/>
        <dbReference type="ChEBI" id="CHEBI:15378"/>
        <dbReference type="ChEBI" id="CHEBI:57597"/>
        <dbReference type="ChEBI" id="CHEBI:57642"/>
        <dbReference type="ChEBI" id="CHEBI:57783"/>
        <dbReference type="ChEBI" id="CHEBI:58349"/>
        <dbReference type="EC" id="1.1.1.94"/>
    </reaction>
    <physiologicalReaction direction="right-to-left" evidence="1">
        <dbReference type="Rhea" id="RHEA:11098"/>
    </physiologicalReaction>
</comment>
<comment type="pathway">
    <text evidence="1">Membrane lipid metabolism; glycerophospholipid metabolism.</text>
</comment>
<comment type="subcellular location">
    <subcellularLocation>
        <location evidence="1">Cytoplasm</location>
    </subcellularLocation>
</comment>
<comment type="similarity">
    <text evidence="1">Belongs to the NAD-dependent glycerol-3-phosphate dehydrogenase family.</text>
</comment>
<protein>
    <recommendedName>
        <fullName evidence="1">Glycerol-3-phosphate dehydrogenase [NAD(P)+]</fullName>
        <ecNumber evidence="1">1.1.1.94</ecNumber>
    </recommendedName>
    <alternativeName>
        <fullName evidence="1">NAD(P)(+)-dependent glycerol-3-phosphate dehydrogenase</fullName>
    </alternativeName>
    <alternativeName>
        <fullName evidence="1">NAD(P)H-dependent dihydroxyacetone-phosphate reductase</fullName>
    </alternativeName>
</protein>
<accession>Q6G0U8</accession>
<proteinExistence type="inferred from homology"/>
<feature type="chain" id="PRO_0000137928" description="Glycerol-3-phosphate dehydrogenase [NAD(P)+]">
    <location>
        <begin position="1"/>
        <end position="340"/>
    </location>
</feature>
<feature type="active site" description="Proton acceptor" evidence="1">
    <location>
        <position position="193"/>
    </location>
</feature>
<feature type="binding site" evidence="1">
    <location>
        <position position="13"/>
    </location>
    <ligand>
        <name>NADPH</name>
        <dbReference type="ChEBI" id="CHEBI:57783"/>
    </ligand>
</feature>
<feature type="binding site" evidence="1">
    <location>
        <position position="14"/>
    </location>
    <ligand>
        <name>NADPH</name>
        <dbReference type="ChEBI" id="CHEBI:57783"/>
    </ligand>
</feature>
<feature type="binding site" evidence="1">
    <location>
        <position position="108"/>
    </location>
    <ligand>
        <name>NADPH</name>
        <dbReference type="ChEBI" id="CHEBI:57783"/>
    </ligand>
</feature>
<feature type="binding site" evidence="1">
    <location>
        <position position="108"/>
    </location>
    <ligand>
        <name>sn-glycerol 3-phosphate</name>
        <dbReference type="ChEBI" id="CHEBI:57597"/>
    </ligand>
</feature>
<feature type="binding site" evidence="1">
    <location>
        <position position="137"/>
    </location>
    <ligand>
        <name>sn-glycerol 3-phosphate</name>
        <dbReference type="ChEBI" id="CHEBI:57597"/>
    </ligand>
</feature>
<feature type="binding site" evidence="1">
    <location>
        <position position="139"/>
    </location>
    <ligand>
        <name>sn-glycerol 3-phosphate</name>
        <dbReference type="ChEBI" id="CHEBI:57597"/>
    </ligand>
</feature>
<feature type="binding site" evidence="1">
    <location>
        <position position="141"/>
    </location>
    <ligand>
        <name>NADPH</name>
        <dbReference type="ChEBI" id="CHEBI:57783"/>
    </ligand>
</feature>
<feature type="binding site" evidence="1">
    <location>
        <position position="193"/>
    </location>
    <ligand>
        <name>sn-glycerol 3-phosphate</name>
        <dbReference type="ChEBI" id="CHEBI:57597"/>
    </ligand>
</feature>
<feature type="binding site" evidence="1">
    <location>
        <position position="246"/>
    </location>
    <ligand>
        <name>sn-glycerol 3-phosphate</name>
        <dbReference type="ChEBI" id="CHEBI:57597"/>
    </ligand>
</feature>
<feature type="binding site" evidence="1">
    <location>
        <position position="256"/>
    </location>
    <ligand>
        <name>sn-glycerol 3-phosphate</name>
        <dbReference type="ChEBI" id="CHEBI:57597"/>
    </ligand>
</feature>
<feature type="binding site" evidence="1">
    <location>
        <position position="257"/>
    </location>
    <ligand>
        <name>NADPH</name>
        <dbReference type="ChEBI" id="CHEBI:57783"/>
    </ligand>
</feature>
<feature type="binding site" evidence="1">
    <location>
        <position position="257"/>
    </location>
    <ligand>
        <name>sn-glycerol 3-phosphate</name>
        <dbReference type="ChEBI" id="CHEBI:57597"/>
    </ligand>
</feature>
<feature type="binding site" evidence="1">
    <location>
        <position position="258"/>
    </location>
    <ligand>
        <name>sn-glycerol 3-phosphate</name>
        <dbReference type="ChEBI" id="CHEBI:57597"/>
    </ligand>
</feature>
<feature type="binding site" evidence="1">
    <location>
        <position position="281"/>
    </location>
    <ligand>
        <name>NADPH</name>
        <dbReference type="ChEBI" id="CHEBI:57783"/>
    </ligand>
</feature>
<feature type="binding site" evidence="1">
    <location>
        <position position="283"/>
    </location>
    <ligand>
        <name>NADPH</name>
        <dbReference type="ChEBI" id="CHEBI:57783"/>
    </ligand>
</feature>
<name>GPDA_BARQU</name>
<organism>
    <name type="scientific">Bartonella quintana (strain Toulouse)</name>
    <name type="common">Rochalimaea quintana</name>
    <dbReference type="NCBI Taxonomy" id="283165"/>
    <lineage>
        <taxon>Bacteria</taxon>
        <taxon>Pseudomonadati</taxon>
        <taxon>Pseudomonadota</taxon>
        <taxon>Alphaproteobacteria</taxon>
        <taxon>Hyphomicrobiales</taxon>
        <taxon>Bartonellaceae</taxon>
        <taxon>Bartonella</taxon>
    </lineage>
</organism>
<keyword id="KW-0963">Cytoplasm</keyword>
<keyword id="KW-0444">Lipid biosynthesis</keyword>
<keyword id="KW-0443">Lipid metabolism</keyword>
<keyword id="KW-0520">NAD</keyword>
<keyword id="KW-0521">NADP</keyword>
<keyword id="KW-0547">Nucleotide-binding</keyword>
<keyword id="KW-0560">Oxidoreductase</keyword>
<keyword id="KW-0594">Phospholipid biosynthesis</keyword>
<keyword id="KW-1208">Phospholipid metabolism</keyword>